<keyword id="KW-0687">Ribonucleoprotein</keyword>
<keyword id="KW-0689">Ribosomal protein</keyword>
<keyword id="KW-0694">RNA-binding</keyword>
<keyword id="KW-0699">rRNA-binding</keyword>
<evidence type="ECO:0000255" key="1">
    <source>
        <dbReference type="HAMAP-Rule" id="MF_00360"/>
    </source>
</evidence>
<evidence type="ECO:0000305" key="2"/>
<sequence>MAKYEILYIIRPNIEEEAKNALVARFDSILTDNGATVVESKDWEKRRLAYEINDFREGLYHIVNLEATDAAALNEFDRLSKINGDILRHMIVKLDA</sequence>
<gene>
    <name evidence="1" type="primary">rpsF</name>
    <name type="ordered locus">MGAS2096_Spy1580</name>
</gene>
<protein>
    <recommendedName>
        <fullName evidence="1">Small ribosomal subunit protein bS6</fullName>
    </recommendedName>
    <alternativeName>
        <fullName evidence="2">30S ribosomal protein S6</fullName>
    </alternativeName>
</protein>
<comment type="function">
    <text evidence="1">Binds together with bS18 to 16S ribosomal RNA.</text>
</comment>
<comment type="similarity">
    <text evidence="1">Belongs to the bacterial ribosomal protein bS6 family.</text>
</comment>
<proteinExistence type="inferred from homology"/>
<dbReference type="EMBL" id="CP000261">
    <property type="protein sequence ID" value="ABF36632.1"/>
    <property type="molecule type" value="Genomic_DNA"/>
</dbReference>
<dbReference type="SMR" id="Q1JA29"/>
<dbReference type="KEGG" id="spj:MGAS2096_Spy1580"/>
<dbReference type="HOGENOM" id="CLU_113441_5_3_9"/>
<dbReference type="GO" id="GO:0005737">
    <property type="term" value="C:cytoplasm"/>
    <property type="evidence" value="ECO:0007669"/>
    <property type="project" value="UniProtKB-ARBA"/>
</dbReference>
<dbReference type="GO" id="GO:1990904">
    <property type="term" value="C:ribonucleoprotein complex"/>
    <property type="evidence" value="ECO:0007669"/>
    <property type="project" value="UniProtKB-KW"/>
</dbReference>
<dbReference type="GO" id="GO:0005840">
    <property type="term" value="C:ribosome"/>
    <property type="evidence" value="ECO:0007669"/>
    <property type="project" value="UniProtKB-KW"/>
</dbReference>
<dbReference type="GO" id="GO:0070181">
    <property type="term" value="F:small ribosomal subunit rRNA binding"/>
    <property type="evidence" value="ECO:0007669"/>
    <property type="project" value="TreeGrafter"/>
</dbReference>
<dbReference type="GO" id="GO:0003735">
    <property type="term" value="F:structural constituent of ribosome"/>
    <property type="evidence" value="ECO:0007669"/>
    <property type="project" value="InterPro"/>
</dbReference>
<dbReference type="GO" id="GO:0006412">
    <property type="term" value="P:translation"/>
    <property type="evidence" value="ECO:0007669"/>
    <property type="project" value="UniProtKB-UniRule"/>
</dbReference>
<dbReference type="CDD" id="cd00473">
    <property type="entry name" value="bS6"/>
    <property type="match status" value="1"/>
</dbReference>
<dbReference type="FunFam" id="3.30.70.60:FF:000002">
    <property type="entry name" value="30S ribosomal protein S6"/>
    <property type="match status" value="1"/>
</dbReference>
<dbReference type="Gene3D" id="3.30.70.60">
    <property type="match status" value="1"/>
</dbReference>
<dbReference type="HAMAP" id="MF_00360">
    <property type="entry name" value="Ribosomal_bS6"/>
    <property type="match status" value="1"/>
</dbReference>
<dbReference type="InterPro" id="IPR000529">
    <property type="entry name" value="Ribosomal_bS6"/>
</dbReference>
<dbReference type="InterPro" id="IPR035980">
    <property type="entry name" value="Ribosomal_bS6_sf"/>
</dbReference>
<dbReference type="InterPro" id="IPR020814">
    <property type="entry name" value="Ribosomal_S6_plastid/chlpt"/>
</dbReference>
<dbReference type="InterPro" id="IPR014717">
    <property type="entry name" value="Transl_elong_EF1B/ribsomal_bS6"/>
</dbReference>
<dbReference type="NCBIfam" id="TIGR00166">
    <property type="entry name" value="S6"/>
    <property type="match status" value="1"/>
</dbReference>
<dbReference type="PANTHER" id="PTHR21011">
    <property type="entry name" value="MITOCHONDRIAL 28S RIBOSOMAL PROTEIN S6"/>
    <property type="match status" value="1"/>
</dbReference>
<dbReference type="PANTHER" id="PTHR21011:SF1">
    <property type="entry name" value="SMALL RIBOSOMAL SUBUNIT PROTEIN BS6M"/>
    <property type="match status" value="1"/>
</dbReference>
<dbReference type="Pfam" id="PF01250">
    <property type="entry name" value="Ribosomal_S6"/>
    <property type="match status" value="1"/>
</dbReference>
<dbReference type="SUPFAM" id="SSF54995">
    <property type="entry name" value="Ribosomal protein S6"/>
    <property type="match status" value="1"/>
</dbReference>
<organism>
    <name type="scientific">Streptococcus pyogenes serotype M12 (strain MGAS2096)</name>
    <dbReference type="NCBI Taxonomy" id="370553"/>
    <lineage>
        <taxon>Bacteria</taxon>
        <taxon>Bacillati</taxon>
        <taxon>Bacillota</taxon>
        <taxon>Bacilli</taxon>
        <taxon>Lactobacillales</taxon>
        <taxon>Streptococcaceae</taxon>
        <taxon>Streptococcus</taxon>
    </lineage>
</organism>
<accession>Q1JA29</accession>
<name>RS6_STRPB</name>
<feature type="chain" id="PRO_1000005364" description="Small ribosomal subunit protein bS6">
    <location>
        <begin position="1"/>
        <end position="96"/>
    </location>
</feature>
<reference key="1">
    <citation type="journal article" date="2006" name="Proc. Natl. Acad. Sci. U.S.A.">
        <title>Molecular genetic anatomy of inter- and intraserotype variation in the human bacterial pathogen group A Streptococcus.</title>
        <authorList>
            <person name="Beres S.B."/>
            <person name="Richter E.W."/>
            <person name="Nagiec M.J."/>
            <person name="Sumby P."/>
            <person name="Porcella S.F."/>
            <person name="DeLeo F.R."/>
            <person name="Musser J.M."/>
        </authorList>
    </citation>
    <scope>NUCLEOTIDE SEQUENCE [LARGE SCALE GENOMIC DNA]</scope>
    <source>
        <strain>MGAS2096</strain>
    </source>
</reference>